<gene>
    <name evidence="1" type="primary">ndhE</name>
</gene>
<sequence length="100" mass="11207">MILQHILILSSFLFCLGIFGLITSQNMVKILICLELIFNAVNLNLVIFCKFFDSSAIIGNLFGLFIIAIAAAEAAIALAILLAMYRNRRSIRIDRFNILK</sequence>
<reference key="1">
    <citation type="journal article" date="2006" name="Mol. Biol. Evol.">
        <title>The chloroplast genome sequence of Chara vulgaris sheds new light into the closest green algal relatives of land plants.</title>
        <authorList>
            <person name="Turmel M."/>
            <person name="Otis C."/>
            <person name="Lemieux C."/>
        </authorList>
    </citation>
    <scope>NUCLEOTIDE SEQUENCE [LARGE SCALE GENOMIC DNA]</scope>
</reference>
<proteinExistence type="inferred from homology"/>
<geneLocation type="chloroplast"/>
<organism>
    <name type="scientific">Chara vulgaris</name>
    <name type="common">Common stonewort</name>
    <dbReference type="NCBI Taxonomy" id="55564"/>
    <lineage>
        <taxon>Eukaryota</taxon>
        <taxon>Viridiplantae</taxon>
        <taxon>Streptophyta</taxon>
        <taxon>Charophyceae</taxon>
        <taxon>Charales</taxon>
        <taxon>Characeae</taxon>
        <taxon>Chara</taxon>
    </lineage>
</organism>
<keyword id="KW-0150">Chloroplast</keyword>
<keyword id="KW-0472">Membrane</keyword>
<keyword id="KW-0520">NAD</keyword>
<keyword id="KW-0521">NADP</keyword>
<keyword id="KW-0934">Plastid</keyword>
<keyword id="KW-0618">Plastoquinone</keyword>
<keyword id="KW-0874">Quinone</keyword>
<keyword id="KW-0793">Thylakoid</keyword>
<keyword id="KW-1278">Translocase</keyword>
<keyword id="KW-0812">Transmembrane</keyword>
<keyword id="KW-1133">Transmembrane helix</keyword>
<keyword id="KW-0813">Transport</keyword>
<dbReference type="EC" id="7.1.1.-" evidence="1"/>
<dbReference type="EMBL" id="DQ229107">
    <property type="protein sequence ID" value="ABA61925.1"/>
    <property type="molecule type" value="Genomic_DNA"/>
</dbReference>
<dbReference type="RefSeq" id="YP_635800.1">
    <property type="nucleotide sequence ID" value="NC_008097.1"/>
</dbReference>
<dbReference type="SMR" id="Q1ACE7"/>
<dbReference type="GeneID" id="4100212"/>
<dbReference type="GO" id="GO:0009535">
    <property type="term" value="C:chloroplast thylakoid membrane"/>
    <property type="evidence" value="ECO:0007669"/>
    <property type="project" value="UniProtKB-SubCell"/>
</dbReference>
<dbReference type="GO" id="GO:0030964">
    <property type="term" value="C:NADH dehydrogenase complex"/>
    <property type="evidence" value="ECO:0007669"/>
    <property type="project" value="TreeGrafter"/>
</dbReference>
<dbReference type="GO" id="GO:0016655">
    <property type="term" value="F:oxidoreductase activity, acting on NAD(P)H, quinone or similar compound as acceptor"/>
    <property type="evidence" value="ECO:0007669"/>
    <property type="project" value="UniProtKB-UniRule"/>
</dbReference>
<dbReference type="GO" id="GO:0048038">
    <property type="term" value="F:quinone binding"/>
    <property type="evidence" value="ECO:0007669"/>
    <property type="project" value="UniProtKB-KW"/>
</dbReference>
<dbReference type="GO" id="GO:0042773">
    <property type="term" value="P:ATP synthesis coupled electron transport"/>
    <property type="evidence" value="ECO:0007669"/>
    <property type="project" value="InterPro"/>
</dbReference>
<dbReference type="GO" id="GO:0019684">
    <property type="term" value="P:photosynthesis, light reaction"/>
    <property type="evidence" value="ECO:0007669"/>
    <property type="project" value="UniProtKB-UniRule"/>
</dbReference>
<dbReference type="FunFam" id="1.10.287.3510:FF:000001">
    <property type="entry name" value="NADH-quinone oxidoreductase subunit K"/>
    <property type="match status" value="1"/>
</dbReference>
<dbReference type="Gene3D" id="1.10.287.3510">
    <property type="match status" value="1"/>
</dbReference>
<dbReference type="HAMAP" id="MF_01456">
    <property type="entry name" value="NDH1_NuoK"/>
    <property type="match status" value="1"/>
</dbReference>
<dbReference type="InterPro" id="IPR001133">
    <property type="entry name" value="NADH_UbQ_OxRdtase_chain4L/K"/>
</dbReference>
<dbReference type="InterPro" id="IPR039428">
    <property type="entry name" value="NUOK/Mnh_C1-like"/>
</dbReference>
<dbReference type="NCBIfam" id="NF004320">
    <property type="entry name" value="PRK05715.1-2"/>
    <property type="match status" value="1"/>
</dbReference>
<dbReference type="PANTHER" id="PTHR11434:SF16">
    <property type="entry name" value="NADH-UBIQUINONE OXIDOREDUCTASE CHAIN 4L"/>
    <property type="match status" value="1"/>
</dbReference>
<dbReference type="PANTHER" id="PTHR11434">
    <property type="entry name" value="NADH-UBIQUINONE OXIDOREDUCTASE SUBUNIT ND4L"/>
    <property type="match status" value="1"/>
</dbReference>
<dbReference type="Pfam" id="PF00420">
    <property type="entry name" value="Oxidored_q2"/>
    <property type="match status" value="1"/>
</dbReference>
<name>NU4LC_CHAVU</name>
<accession>Q1ACE7</accession>
<comment type="function">
    <text evidence="1">NDH shuttles electrons from NAD(P)H:plastoquinone, via FMN and iron-sulfur (Fe-S) centers, to quinones in the photosynthetic chain and possibly in a chloroplast respiratory chain. The immediate electron acceptor for the enzyme in this species is believed to be plastoquinone. Couples the redox reaction to proton translocation, and thus conserves the redox energy in a proton gradient.</text>
</comment>
<comment type="catalytic activity">
    <reaction evidence="1">
        <text>a plastoquinone + NADH + (n+1) H(+)(in) = a plastoquinol + NAD(+) + n H(+)(out)</text>
        <dbReference type="Rhea" id="RHEA:42608"/>
        <dbReference type="Rhea" id="RHEA-COMP:9561"/>
        <dbReference type="Rhea" id="RHEA-COMP:9562"/>
        <dbReference type="ChEBI" id="CHEBI:15378"/>
        <dbReference type="ChEBI" id="CHEBI:17757"/>
        <dbReference type="ChEBI" id="CHEBI:57540"/>
        <dbReference type="ChEBI" id="CHEBI:57945"/>
        <dbReference type="ChEBI" id="CHEBI:62192"/>
    </reaction>
</comment>
<comment type="catalytic activity">
    <reaction evidence="1">
        <text>a plastoquinone + NADPH + (n+1) H(+)(in) = a plastoquinol + NADP(+) + n H(+)(out)</text>
        <dbReference type="Rhea" id="RHEA:42612"/>
        <dbReference type="Rhea" id="RHEA-COMP:9561"/>
        <dbReference type="Rhea" id="RHEA-COMP:9562"/>
        <dbReference type="ChEBI" id="CHEBI:15378"/>
        <dbReference type="ChEBI" id="CHEBI:17757"/>
        <dbReference type="ChEBI" id="CHEBI:57783"/>
        <dbReference type="ChEBI" id="CHEBI:58349"/>
        <dbReference type="ChEBI" id="CHEBI:62192"/>
    </reaction>
</comment>
<comment type="subunit">
    <text evidence="1">NDH is composed of at least 16 different subunits, 5 of which are encoded in the nucleus.</text>
</comment>
<comment type="subcellular location">
    <subcellularLocation>
        <location evidence="1">Plastid</location>
        <location evidence="1">Chloroplast thylakoid membrane</location>
        <topology evidence="1">Multi-pass membrane protein</topology>
    </subcellularLocation>
</comment>
<comment type="similarity">
    <text evidence="1">Belongs to the complex I subunit 4L family.</text>
</comment>
<feature type="chain" id="PRO_0000360314" description="NAD(P)H-quinone oxidoreductase subunit 4L, chloroplastic">
    <location>
        <begin position="1"/>
        <end position="100"/>
    </location>
</feature>
<feature type="transmembrane region" description="Helical" evidence="1">
    <location>
        <begin position="2"/>
        <end position="22"/>
    </location>
</feature>
<feature type="transmembrane region" description="Helical" evidence="1">
    <location>
        <begin position="28"/>
        <end position="48"/>
    </location>
</feature>
<feature type="transmembrane region" description="Helical" evidence="1">
    <location>
        <begin position="61"/>
        <end position="81"/>
    </location>
</feature>
<evidence type="ECO:0000255" key="1">
    <source>
        <dbReference type="HAMAP-Rule" id="MF_01456"/>
    </source>
</evidence>
<protein>
    <recommendedName>
        <fullName evidence="1">NAD(P)H-quinone oxidoreductase subunit 4L, chloroplastic</fullName>
        <ecNumber evidence="1">7.1.1.-</ecNumber>
    </recommendedName>
    <alternativeName>
        <fullName evidence="1">NAD(P)H dehydrogenase subunit 4L</fullName>
    </alternativeName>
    <alternativeName>
        <fullName evidence="1">NADH-plastoquinone oxidoreductase subunit 4L</fullName>
    </alternativeName>
</protein>